<reference key="1">
    <citation type="journal article" date="2007" name="Environ. Microbiol.">
        <title>Whole-genome analysis of the ammonia-oxidizing bacterium, Nitrosomonas eutropha C91: implications for niche adaptation.</title>
        <authorList>
            <person name="Stein L.Y."/>
            <person name="Arp D.J."/>
            <person name="Berube P.M."/>
            <person name="Chain P.S."/>
            <person name="Hauser L."/>
            <person name="Jetten M.S."/>
            <person name="Klotz M.G."/>
            <person name="Larimer F.W."/>
            <person name="Norton J.M."/>
            <person name="Op den Camp H.J.M."/>
            <person name="Shin M."/>
            <person name="Wei X."/>
        </authorList>
    </citation>
    <scope>NUCLEOTIDE SEQUENCE [LARGE SCALE GENOMIC DNA]</scope>
    <source>
        <strain>DSM 101675 / C91 / Nm57</strain>
    </source>
</reference>
<feature type="chain" id="PRO_1000011187" description="Phosphopantetheine adenylyltransferase">
    <location>
        <begin position="1"/>
        <end position="164"/>
    </location>
</feature>
<feature type="binding site" evidence="1">
    <location>
        <begin position="9"/>
        <end position="10"/>
    </location>
    <ligand>
        <name>ATP</name>
        <dbReference type="ChEBI" id="CHEBI:30616"/>
    </ligand>
</feature>
<feature type="binding site" evidence="1">
    <location>
        <position position="9"/>
    </location>
    <ligand>
        <name>substrate</name>
    </ligand>
</feature>
<feature type="binding site" evidence="1">
    <location>
        <position position="17"/>
    </location>
    <ligand>
        <name>ATP</name>
        <dbReference type="ChEBI" id="CHEBI:30616"/>
    </ligand>
</feature>
<feature type="binding site" evidence="1">
    <location>
        <position position="41"/>
    </location>
    <ligand>
        <name>substrate</name>
    </ligand>
</feature>
<feature type="binding site" evidence="1">
    <location>
        <position position="73"/>
    </location>
    <ligand>
        <name>substrate</name>
    </ligand>
</feature>
<feature type="binding site" evidence="1">
    <location>
        <position position="87"/>
    </location>
    <ligand>
        <name>substrate</name>
    </ligand>
</feature>
<feature type="binding site" evidence="1">
    <location>
        <begin position="88"/>
        <end position="90"/>
    </location>
    <ligand>
        <name>ATP</name>
        <dbReference type="ChEBI" id="CHEBI:30616"/>
    </ligand>
</feature>
<feature type="binding site" evidence="1">
    <location>
        <position position="98"/>
    </location>
    <ligand>
        <name>ATP</name>
        <dbReference type="ChEBI" id="CHEBI:30616"/>
    </ligand>
</feature>
<feature type="binding site" evidence="1">
    <location>
        <begin position="123"/>
        <end position="129"/>
    </location>
    <ligand>
        <name>ATP</name>
        <dbReference type="ChEBI" id="CHEBI:30616"/>
    </ligand>
</feature>
<feature type="site" description="Transition state stabilizer" evidence="1">
    <location>
        <position position="17"/>
    </location>
</feature>
<name>COAD_NITEC</name>
<accession>Q0ADM4</accession>
<protein>
    <recommendedName>
        <fullName evidence="1">Phosphopantetheine adenylyltransferase</fullName>
        <ecNumber evidence="1">2.7.7.3</ecNumber>
    </recommendedName>
    <alternativeName>
        <fullName evidence="1">Dephospho-CoA pyrophosphorylase</fullName>
    </alternativeName>
    <alternativeName>
        <fullName evidence="1">Pantetheine-phosphate adenylyltransferase</fullName>
        <shortName evidence="1">PPAT</shortName>
    </alternativeName>
</protein>
<dbReference type="EC" id="2.7.7.3" evidence="1"/>
<dbReference type="EMBL" id="CP000450">
    <property type="protein sequence ID" value="ABI60558.1"/>
    <property type="molecule type" value="Genomic_DNA"/>
</dbReference>
<dbReference type="RefSeq" id="WP_011635329.1">
    <property type="nucleotide sequence ID" value="NC_008344.1"/>
</dbReference>
<dbReference type="SMR" id="Q0ADM4"/>
<dbReference type="STRING" id="335283.Neut_2341"/>
<dbReference type="KEGG" id="net:Neut_2341"/>
<dbReference type="eggNOG" id="COG0669">
    <property type="taxonomic scope" value="Bacteria"/>
</dbReference>
<dbReference type="HOGENOM" id="CLU_100149_0_1_4"/>
<dbReference type="OrthoDB" id="9806661at2"/>
<dbReference type="UniPathway" id="UPA00241">
    <property type="reaction ID" value="UER00355"/>
</dbReference>
<dbReference type="Proteomes" id="UP000001966">
    <property type="component" value="Chromosome"/>
</dbReference>
<dbReference type="GO" id="GO:0005737">
    <property type="term" value="C:cytoplasm"/>
    <property type="evidence" value="ECO:0007669"/>
    <property type="project" value="UniProtKB-SubCell"/>
</dbReference>
<dbReference type="GO" id="GO:0005524">
    <property type="term" value="F:ATP binding"/>
    <property type="evidence" value="ECO:0007669"/>
    <property type="project" value="UniProtKB-KW"/>
</dbReference>
<dbReference type="GO" id="GO:0004595">
    <property type="term" value="F:pantetheine-phosphate adenylyltransferase activity"/>
    <property type="evidence" value="ECO:0007669"/>
    <property type="project" value="UniProtKB-UniRule"/>
</dbReference>
<dbReference type="GO" id="GO:0015937">
    <property type="term" value="P:coenzyme A biosynthetic process"/>
    <property type="evidence" value="ECO:0007669"/>
    <property type="project" value="UniProtKB-UniRule"/>
</dbReference>
<dbReference type="CDD" id="cd02163">
    <property type="entry name" value="PPAT"/>
    <property type="match status" value="1"/>
</dbReference>
<dbReference type="Gene3D" id="3.40.50.620">
    <property type="entry name" value="HUPs"/>
    <property type="match status" value="1"/>
</dbReference>
<dbReference type="HAMAP" id="MF_00151">
    <property type="entry name" value="PPAT_bact"/>
    <property type="match status" value="1"/>
</dbReference>
<dbReference type="InterPro" id="IPR004821">
    <property type="entry name" value="Cyt_trans-like"/>
</dbReference>
<dbReference type="InterPro" id="IPR001980">
    <property type="entry name" value="PPAT"/>
</dbReference>
<dbReference type="InterPro" id="IPR014729">
    <property type="entry name" value="Rossmann-like_a/b/a_fold"/>
</dbReference>
<dbReference type="NCBIfam" id="TIGR01510">
    <property type="entry name" value="coaD_prev_kdtB"/>
    <property type="match status" value="1"/>
</dbReference>
<dbReference type="NCBIfam" id="TIGR00125">
    <property type="entry name" value="cyt_tran_rel"/>
    <property type="match status" value="1"/>
</dbReference>
<dbReference type="PANTHER" id="PTHR21342">
    <property type="entry name" value="PHOSPHOPANTETHEINE ADENYLYLTRANSFERASE"/>
    <property type="match status" value="1"/>
</dbReference>
<dbReference type="PANTHER" id="PTHR21342:SF1">
    <property type="entry name" value="PHOSPHOPANTETHEINE ADENYLYLTRANSFERASE"/>
    <property type="match status" value="1"/>
</dbReference>
<dbReference type="Pfam" id="PF01467">
    <property type="entry name" value="CTP_transf_like"/>
    <property type="match status" value="1"/>
</dbReference>
<dbReference type="PRINTS" id="PR01020">
    <property type="entry name" value="LPSBIOSNTHSS"/>
</dbReference>
<dbReference type="SUPFAM" id="SSF52374">
    <property type="entry name" value="Nucleotidylyl transferase"/>
    <property type="match status" value="1"/>
</dbReference>
<proteinExistence type="inferred from homology"/>
<comment type="function">
    <text evidence="1">Reversibly transfers an adenylyl group from ATP to 4'-phosphopantetheine, yielding dephospho-CoA (dPCoA) and pyrophosphate.</text>
</comment>
<comment type="catalytic activity">
    <reaction evidence="1">
        <text>(R)-4'-phosphopantetheine + ATP + H(+) = 3'-dephospho-CoA + diphosphate</text>
        <dbReference type="Rhea" id="RHEA:19801"/>
        <dbReference type="ChEBI" id="CHEBI:15378"/>
        <dbReference type="ChEBI" id="CHEBI:30616"/>
        <dbReference type="ChEBI" id="CHEBI:33019"/>
        <dbReference type="ChEBI" id="CHEBI:57328"/>
        <dbReference type="ChEBI" id="CHEBI:61723"/>
        <dbReference type="EC" id="2.7.7.3"/>
    </reaction>
</comment>
<comment type="cofactor">
    <cofactor evidence="1">
        <name>Mg(2+)</name>
        <dbReference type="ChEBI" id="CHEBI:18420"/>
    </cofactor>
</comment>
<comment type="pathway">
    <text evidence="1">Cofactor biosynthesis; coenzyme A biosynthesis; CoA from (R)-pantothenate: step 4/5.</text>
</comment>
<comment type="subunit">
    <text evidence="1">Homohexamer.</text>
</comment>
<comment type="subcellular location">
    <subcellularLocation>
        <location evidence="1">Cytoplasm</location>
    </subcellularLocation>
</comment>
<comment type="similarity">
    <text evidence="1">Belongs to the bacterial CoaD family.</text>
</comment>
<gene>
    <name evidence="1" type="primary">coaD</name>
    <name type="ordered locus">Neut_2341</name>
</gene>
<keyword id="KW-0067">ATP-binding</keyword>
<keyword id="KW-0173">Coenzyme A biosynthesis</keyword>
<keyword id="KW-0963">Cytoplasm</keyword>
<keyword id="KW-0460">Magnesium</keyword>
<keyword id="KW-0547">Nucleotide-binding</keyword>
<keyword id="KW-0548">Nucleotidyltransferase</keyword>
<keyword id="KW-0808">Transferase</keyword>
<evidence type="ECO:0000255" key="1">
    <source>
        <dbReference type="HAMAP-Rule" id="MF_00151"/>
    </source>
</evidence>
<sequence>MDKVIYPGTFDPITHGHEDLVYRASRLFGKVIVAVAVSSGKAPFFSLEERVKMARNVLTGYSNVEVTGFSGLLMEFARQQDAHIIIRGLRAVSDFEYEFQLAGMNRGLYPDVETIFLTPSEQYMFISATIVREIARLGGDVSKFVHPLVIERLRQKKIEMNNGE</sequence>
<organism>
    <name type="scientific">Nitrosomonas eutropha (strain DSM 101675 / C91 / Nm57)</name>
    <dbReference type="NCBI Taxonomy" id="335283"/>
    <lineage>
        <taxon>Bacteria</taxon>
        <taxon>Pseudomonadati</taxon>
        <taxon>Pseudomonadota</taxon>
        <taxon>Betaproteobacteria</taxon>
        <taxon>Nitrosomonadales</taxon>
        <taxon>Nitrosomonadaceae</taxon>
        <taxon>Nitrosomonas</taxon>
    </lineage>
</organism>